<feature type="chain" id="PRO_0000169043" description="Uncharacterized protein YebG">
    <location>
        <begin position="1"/>
        <end position="96"/>
    </location>
</feature>
<proteinExistence type="predicted"/>
<dbReference type="EMBL" id="L20897">
    <property type="protein sequence ID" value="AAA23860.1"/>
    <property type="molecule type" value="Genomic_DNA"/>
</dbReference>
<dbReference type="EMBL" id="U00096">
    <property type="protein sequence ID" value="AAC74918.1"/>
    <property type="molecule type" value="Genomic_DNA"/>
</dbReference>
<dbReference type="EMBL" id="AP009048">
    <property type="protein sequence ID" value="BAA15654.1"/>
    <property type="molecule type" value="Genomic_DNA"/>
</dbReference>
<dbReference type="PIR" id="H64946">
    <property type="entry name" value="H64946"/>
</dbReference>
<dbReference type="RefSeq" id="NP_416362.1">
    <property type="nucleotide sequence ID" value="NC_000913.3"/>
</dbReference>
<dbReference type="RefSeq" id="WP_000257738.1">
    <property type="nucleotide sequence ID" value="NZ_STEB01000009.1"/>
</dbReference>
<dbReference type="SMR" id="P0ACY9"/>
<dbReference type="BioGRID" id="4260364">
    <property type="interactions" value="242"/>
</dbReference>
<dbReference type="DIP" id="DIP-48077N"/>
<dbReference type="FunCoup" id="P0ACY9">
    <property type="interactions" value="97"/>
</dbReference>
<dbReference type="IntAct" id="P0ACY9">
    <property type="interactions" value="12"/>
</dbReference>
<dbReference type="STRING" id="511145.b1848"/>
<dbReference type="PaxDb" id="511145-b1848"/>
<dbReference type="EnsemblBacteria" id="AAC74918">
    <property type="protein sequence ID" value="AAC74918"/>
    <property type="gene ID" value="b1848"/>
</dbReference>
<dbReference type="GeneID" id="93776115"/>
<dbReference type="GeneID" id="946364"/>
<dbReference type="KEGG" id="ecj:JW1837"/>
<dbReference type="KEGG" id="eco:b1848"/>
<dbReference type="KEGG" id="ecoc:C3026_10530"/>
<dbReference type="PATRIC" id="fig|511145.12.peg.1926"/>
<dbReference type="EchoBASE" id="EB1756"/>
<dbReference type="eggNOG" id="COG3141">
    <property type="taxonomic scope" value="Bacteria"/>
</dbReference>
<dbReference type="HOGENOM" id="CLU_146554_1_0_6"/>
<dbReference type="InParanoid" id="P0ACY9"/>
<dbReference type="OMA" id="QMDETQA"/>
<dbReference type="OrthoDB" id="6415307at2"/>
<dbReference type="PhylomeDB" id="P0ACY9"/>
<dbReference type="BioCyc" id="EcoCyc:EG11808-MONOMER"/>
<dbReference type="PRO" id="PR:P0ACY9"/>
<dbReference type="Proteomes" id="UP000000625">
    <property type="component" value="Chromosome"/>
</dbReference>
<dbReference type="GO" id="GO:0005829">
    <property type="term" value="C:cytosol"/>
    <property type="evidence" value="ECO:0000314"/>
    <property type="project" value="EcoCyc"/>
</dbReference>
<dbReference type="GO" id="GO:0006281">
    <property type="term" value="P:DNA repair"/>
    <property type="evidence" value="ECO:0000270"/>
    <property type="project" value="EcoCyc"/>
</dbReference>
<dbReference type="GO" id="GO:0010165">
    <property type="term" value="P:response to X-ray"/>
    <property type="evidence" value="ECO:0000315"/>
    <property type="project" value="EcoCyc"/>
</dbReference>
<dbReference type="GO" id="GO:0009432">
    <property type="term" value="P:SOS response"/>
    <property type="evidence" value="ECO:0000270"/>
    <property type="project" value="EcoCyc"/>
</dbReference>
<dbReference type="Gene3D" id="1.10.10.710">
    <property type="entry name" value="PSPTO_1197 like"/>
    <property type="match status" value="1"/>
</dbReference>
<dbReference type="InterPro" id="IPR009813">
    <property type="entry name" value="Uncharacterised_YebG"/>
</dbReference>
<dbReference type="InterPro" id="IPR038627">
    <property type="entry name" value="YebG-like_sf"/>
</dbReference>
<dbReference type="NCBIfam" id="NF007475">
    <property type="entry name" value="PRK10061.1"/>
    <property type="match status" value="1"/>
</dbReference>
<dbReference type="Pfam" id="PF07130">
    <property type="entry name" value="YebG"/>
    <property type="match status" value="1"/>
</dbReference>
<sequence>MAVEVKYVVIREGEEKMSFTSKKEADAYDKMLDTADLLDTWLTNSPVQMEDEQREALSLWLAEQKDVLSTILKTGKLPSPQVVGAESEEEDASHAA</sequence>
<gene>
    <name type="primary">yebG</name>
    <name type="ordered locus">b1848</name>
    <name type="ordered locus">JW1837</name>
</gene>
<reference key="1">
    <citation type="submission" date="1993-07" db="EMBL/GenBank/DDBJ databases">
        <title>Purine and one-carbon metabolism in Escherichia coli K12: DNA sequence of a second GAR transformylase.</title>
        <authorList>
            <person name="Smith J.M."/>
            <person name="Nygaard P."/>
        </authorList>
    </citation>
    <scope>NUCLEOTIDE SEQUENCE [GENOMIC DNA]</scope>
    <source>
        <strain>K12</strain>
    </source>
</reference>
<reference key="2">
    <citation type="journal article" date="1996" name="DNA Res.">
        <title>A 460-kb DNA sequence of the Escherichia coli K-12 genome corresponding to the 40.1-50.0 min region on the linkage map.</title>
        <authorList>
            <person name="Itoh T."/>
            <person name="Aiba H."/>
            <person name="Baba T."/>
            <person name="Fujita K."/>
            <person name="Hayashi K."/>
            <person name="Inada T."/>
            <person name="Isono K."/>
            <person name="Kasai H."/>
            <person name="Kimura S."/>
            <person name="Kitakawa M."/>
            <person name="Kitagawa M."/>
            <person name="Makino K."/>
            <person name="Miki T."/>
            <person name="Mizobuchi K."/>
            <person name="Mori H."/>
            <person name="Mori T."/>
            <person name="Motomura K."/>
            <person name="Nakade S."/>
            <person name="Nakamura Y."/>
            <person name="Nashimoto H."/>
            <person name="Nishio Y."/>
            <person name="Oshima T."/>
            <person name="Saito N."/>
            <person name="Sampei G."/>
            <person name="Seki Y."/>
            <person name="Sivasundaram S."/>
            <person name="Tagami H."/>
            <person name="Takeda J."/>
            <person name="Takemoto K."/>
            <person name="Wada C."/>
            <person name="Yamamoto Y."/>
            <person name="Horiuchi T."/>
        </authorList>
    </citation>
    <scope>NUCLEOTIDE SEQUENCE [LARGE SCALE GENOMIC DNA]</scope>
    <source>
        <strain>K12 / W3110 / ATCC 27325 / DSM 5911</strain>
    </source>
</reference>
<reference key="3">
    <citation type="journal article" date="1997" name="Science">
        <title>The complete genome sequence of Escherichia coli K-12.</title>
        <authorList>
            <person name="Blattner F.R."/>
            <person name="Plunkett G. III"/>
            <person name="Bloch C.A."/>
            <person name="Perna N.T."/>
            <person name="Burland V."/>
            <person name="Riley M."/>
            <person name="Collado-Vides J."/>
            <person name="Glasner J.D."/>
            <person name="Rode C.K."/>
            <person name="Mayhew G.F."/>
            <person name="Gregor J."/>
            <person name="Davis N.W."/>
            <person name="Kirkpatrick H.A."/>
            <person name="Goeden M.A."/>
            <person name="Rose D.J."/>
            <person name="Mau B."/>
            <person name="Shao Y."/>
        </authorList>
    </citation>
    <scope>NUCLEOTIDE SEQUENCE [LARGE SCALE GENOMIC DNA]</scope>
    <source>
        <strain>K12 / MG1655 / ATCC 47076</strain>
    </source>
</reference>
<reference key="4">
    <citation type="journal article" date="2006" name="Mol. Syst. Biol.">
        <title>Highly accurate genome sequences of Escherichia coli K-12 strains MG1655 and W3110.</title>
        <authorList>
            <person name="Hayashi K."/>
            <person name="Morooka N."/>
            <person name="Yamamoto Y."/>
            <person name="Fujita K."/>
            <person name="Isono K."/>
            <person name="Choi S."/>
            <person name="Ohtsubo E."/>
            <person name="Baba T."/>
            <person name="Wanner B.L."/>
            <person name="Mori H."/>
            <person name="Horiuchi T."/>
        </authorList>
    </citation>
    <scope>NUCLEOTIDE SEQUENCE [LARGE SCALE GENOMIC DNA]</scope>
    <source>
        <strain>K12 / W3110 / ATCC 27325 / DSM 5911</strain>
    </source>
</reference>
<name>YEBG_ECOLI</name>
<organism>
    <name type="scientific">Escherichia coli (strain K12)</name>
    <dbReference type="NCBI Taxonomy" id="83333"/>
    <lineage>
        <taxon>Bacteria</taxon>
        <taxon>Pseudomonadati</taxon>
        <taxon>Pseudomonadota</taxon>
        <taxon>Gammaproteobacteria</taxon>
        <taxon>Enterobacterales</taxon>
        <taxon>Enterobacteriaceae</taxon>
        <taxon>Escherichia</taxon>
    </lineage>
</organism>
<accession>P0ACY9</accession>
<accession>P33220</accession>
<keyword id="KW-1185">Reference proteome</keyword>
<protein>
    <recommendedName>
        <fullName>Uncharacterized protein YebG</fullName>
    </recommendedName>
</protein>